<proteinExistence type="inferred from homology"/>
<evidence type="ECO:0000255" key="1">
    <source>
        <dbReference type="HAMAP-Rule" id="MF_00137"/>
    </source>
</evidence>
<keyword id="KW-0067">ATP-binding</keyword>
<keyword id="KW-0436">Ligase</keyword>
<keyword id="KW-0547">Nucleotide-binding</keyword>
<keyword id="KW-0658">Purine biosynthesis</keyword>
<dbReference type="EC" id="6.3.2.6" evidence="1"/>
<dbReference type="EMBL" id="AP008957">
    <property type="protein sequence ID" value="BAH31741.1"/>
    <property type="molecule type" value="Genomic_DNA"/>
</dbReference>
<dbReference type="RefSeq" id="WP_019747067.1">
    <property type="nucleotide sequence ID" value="NC_012490.1"/>
</dbReference>
<dbReference type="SMR" id="C0ZRJ1"/>
<dbReference type="KEGG" id="rer:RER_10330"/>
<dbReference type="eggNOG" id="COG0152">
    <property type="taxonomic scope" value="Bacteria"/>
</dbReference>
<dbReference type="HOGENOM" id="CLU_045637_0_0_11"/>
<dbReference type="UniPathway" id="UPA00074">
    <property type="reaction ID" value="UER00131"/>
</dbReference>
<dbReference type="Proteomes" id="UP000002204">
    <property type="component" value="Chromosome"/>
</dbReference>
<dbReference type="GO" id="GO:0005737">
    <property type="term" value="C:cytoplasm"/>
    <property type="evidence" value="ECO:0007669"/>
    <property type="project" value="TreeGrafter"/>
</dbReference>
<dbReference type="GO" id="GO:0005524">
    <property type="term" value="F:ATP binding"/>
    <property type="evidence" value="ECO:0007669"/>
    <property type="project" value="UniProtKB-KW"/>
</dbReference>
<dbReference type="GO" id="GO:0004639">
    <property type="term" value="F:phosphoribosylaminoimidazolesuccinocarboxamide synthase activity"/>
    <property type="evidence" value="ECO:0007669"/>
    <property type="project" value="UniProtKB-UniRule"/>
</dbReference>
<dbReference type="GO" id="GO:0006189">
    <property type="term" value="P:'de novo' IMP biosynthetic process"/>
    <property type="evidence" value="ECO:0007669"/>
    <property type="project" value="UniProtKB-UniRule"/>
</dbReference>
<dbReference type="CDD" id="cd01414">
    <property type="entry name" value="SAICAR_synt_Sc"/>
    <property type="match status" value="1"/>
</dbReference>
<dbReference type="FunFam" id="3.30.470.20:FF:000015">
    <property type="entry name" value="Phosphoribosylaminoimidazole-succinocarboxamide synthase"/>
    <property type="match status" value="1"/>
</dbReference>
<dbReference type="Gene3D" id="3.30.470.20">
    <property type="entry name" value="ATP-grasp fold, B domain"/>
    <property type="match status" value="1"/>
</dbReference>
<dbReference type="Gene3D" id="3.30.200.20">
    <property type="entry name" value="Phosphorylase Kinase, domain 1"/>
    <property type="match status" value="1"/>
</dbReference>
<dbReference type="HAMAP" id="MF_00137">
    <property type="entry name" value="SAICAR_synth"/>
    <property type="match status" value="1"/>
</dbReference>
<dbReference type="InterPro" id="IPR028923">
    <property type="entry name" value="SAICAR_synt/ADE2_N"/>
</dbReference>
<dbReference type="InterPro" id="IPR001636">
    <property type="entry name" value="SAICAR_synth"/>
</dbReference>
<dbReference type="InterPro" id="IPR018236">
    <property type="entry name" value="SAICAR_synthetase_CS"/>
</dbReference>
<dbReference type="NCBIfam" id="NF010568">
    <property type="entry name" value="PRK13961.1"/>
    <property type="match status" value="1"/>
</dbReference>
<dbReference type="NCBIfam" id="TIGR00081">
    <property type="entry name" value="purC"/>
    <property type="match status" value="1"/>
</dbReference>
<dbReference type="PANTHER" id="PTHR43700">
    <property type="entry name" value="PHOSPHORIBOSYLAMINOIMIDAZOLE-SUCCINOCARBOXAMIDE SYNTHASE"/>
    <property type="match status" value="1"/>
</dbReference>
<dbReference type="PANTHER" id="PTHR43700:SF1">
    <property type="entry name" value="PHOSPHORIBOSYLAMINOIMIDAZOLE-SUCCINOCARBOXAMIDE SYNTHASE"/>
    <property type="match status" value="1"/>
</dbReference>
<dbReference type="Pfam" id="PF01259">
    <property type="entry name" value="SAICAR_synt"/>
    <property type="match status" value="1"/>
</dbReference>
<dbReference type="SUPFAM" id="SSF56104">
    <property type="entry name" value="SAICAR synthase-like"/>
    <property type="match status" value="1"/>
</dbReference>
<dbReference type="PROSITE" id="PS01057">
    <property type="entry name" value="SAICAR_SYNTHETASE_1"/>
    <property type="match status" value="1"/>
</dbReference>
<dbReference type="PROSITE" id="PS01058">
    <property type="entry name" value="SAICAR_SYNTHETASE_2"/>
    <property type="match status" value="1"/>
</dbReference>
<comment type="catalytic activity">
    <reaction evidence="1">
        <text>5-amino-1-(5-phospho-D-ribosyl)imidazole-4-carboxylate + L-aspartate + ATP = (2S)-2-[5-amino-1-(5-phospho-beta-D-ribosyl)imidazole-4-carboxamido]succinate + ADP + phosphate + 2 H(+)</text>
        <dbReference type="Rhea" id="RHEA:22628"/>
        <dbReference type="ChEBI" id="CHEBI:15378"/>
        <dbReference type="ChEBI" id="CHEBI:29991"/>
        <dbReference type="ChEBI" id="CHEBI:30616"/>
        <dbReference type="ChEBI" id="CHEBI:43474"/>
        <dbReference type="ChEBI" id="CHEBI:58443"/>
        <dbReference type="ChEBI" id="CHEBI:77657"/>
        <dbReference type="ChEBI" id="CHEBI:456216"/>
        <dbReference type="EC" id="6.3.2.6"/>
    </reaction>
</comment>
<comment type="pathway">
    <text evidence="1">Purine metabolism; IMP biosynthesis via de novo pathway; 5-amino-1-(5-phospho-D-ribosyl)imidazole-4-carboxamide from 5-amino-1-(5-phospho-D-ribosyl)imidazole-4-carboxylate: step 1/2.</text>
</comment>
<comment type="similarity">
    <text evidence="1">Belongs to the SAICAR synthetase family.</text>
</comment>
<gene>
    <name evidence="1" type="primary">purC</name>
    <name type="ordered locus">RER_10330</name>
</gene>
<accession>C0ZRJ1</accession>
<feature type="chain" id="PRO_1000203238" description="Phosphoribosylaminoimidazole-succinocarboxamide synthase">
    <location>
        <begin position="1"/>
        <end position="297"/>
    </location>
</feature>
<organism>
    <name type="scientific">Rhodococcus erythropolis (strain PR4 / NBRC 100887)</name>
    <dbReference type="NCBI Taxonomy" id="234621"/>
    <lineage>
        <taxon>Bacteria</taxon>
        <taxon>Bacillati</taxon>
        <taxon>Actinomycetota</taxon>
        <taxon>Actinomycetes</taxon>
        <taxon>Mycobacteriales</taxon>
        <taxon>Nocardiaceae</taxon>
        <taxon>Rhodococcus</taxon>
        <taxon>Rhodococcus erythropolis group</taxon>
    </lineage>
</organism>
<sequence>MRPTLDSYTHLAGGKVRDLYTIDDEHLLLVASDRISAYDHVLSTPIPDKGRVLTAMSVFFFNVLGGTNHLAGEPDDDRIPEEVLGRALVVRSLDMVPVECVVRGFLTGSGLVDYNNTGAVCGVALPEGLVEASRLPDPIFTPASKAALGDHDENISFDQVVEKVGQKLAVQLREDTLDVYARASNFAADRGIILADTKLEFGLDSGGNLVLADEVLTPDSSRYWPLEGYEAGKVQPSFDKQFVRDWLTSPESGWDRSSDTTPPPLPQEIVDATRARYIEAYERISGLSFDDWVGPSA</sequence>
<protein>
    <recommendedName>
        <fullName evidence="1">Phosphoribosylaminoimidazole-succinocarboxamide synthase</fullName>
        <ecNumber evidence="1">6.3.2.6</ecNumber>
    </recommendedName>
    <alternativeName>
        <fullName evidence="1">SAICAR synthetase</fullName>
    </alternativeName>
</protein>
<reference key="1">
    <citation type="submission" date="2005-03" db="EMBL/GenBank/DDBJ databases">
        <title>Comparison of the complete genome sequences of Rhodococcus erythropolis PR4 and Rhodococcus opacus B4.</title>
        <authorList>
            <person name="Takarada H."/>
            <person name="Sekine M."/>
            <person name="Hosoyama A."/>
            <person name="Yamada R."/>
            <person name="Fujisawa T."/>
            <person name="Omata S."/>
            <person name="Shimizu A."/>
            <person name="Tsukatani N."/>
            <person name="Tanikawa S."/>
            <person name="Fujita N."/>
            <person name="Harayama S."/>
        </authorList>
    </citation>
    <scope>NUCLEOTIDE SEQUENCE [LARGE SCALE GENOMIC DNA]</scope>
    <source>
        <strain>PR4 / NBRC 100887</strain>
    </source>
</reference>
<name>PUR7_RHOE4</name>